<comment type="function">
    <text evidence="1">Binds to the 23S rRNA.</text>
</comment>
<comment type="subunit">
    <text evidence="1">Part of the 50S ribosomal subunit.</text>
</comment>
<comment type="similarity">
    <text evidence="1">Belongs to the universal ribosomal protein uL15 family.</text>
</comment>
<reference key="1">
    <citation type="journal article" date="2013" name="Plant Physiol.">
        <title>A Nostoc punctiforme Sugar Transporter Necessary to Establish a Cyanobacterium-Plant Symbiosis.</title>
        <authorList>
            <person name="Ekman M."/>
            <person name="Picossi S."/>
            <person name="Campbell E.L."/>
            <person name="Meeks J.C."/>
            <person name="Flores E."/>
        </authorList>
    </citation>
    <scope>NUCLEOTIDE SEQUENCE [LARGE SCALE GENOMIC DNA]</scope>
    <source>
        <strain>ATCC 29133 / PCC 73102</strain>
    </source>
</reference>
<keyword id="KW-1185">Reference proteome</keyword>
<keyword id="KW-0687">Ribonucleoprotein</keyword>
<keyword id="KW-0689">Ribosomal protein</keyword>
<keyword id="KW-0694">RNA-binding</keyword>
<keyword id="KW-0699">rRNA-binding</keyword>
<feature type="chain" id="PRO_1000142850" description="Large ribosomal subunit protein uL15">
    <location>
        <begin position="1"/>
        <end position="147"/>
    </location>
</feature>
<feature type="region of interest" description="Disordered" evidence="2">
    <location>
        <begin position="1"/>
        <end position="57"/>
    </location>
</feature>
<feature type="compositionally biased region" description="Basic residues" evidence="2">
    <location>
        <begin position="10"/>
        <end position="20"/>
    </location>
</feature>
<sequence>MRLHDVKPQKGSKKRKKRVARGISAGQGASAGLGMRGQKSRSGSGTRPGFEGGQQPLYRRLPKLKGFPIVNQKIYTTINVEKLASLPANTEVTLASLKAAGILTAVKGPLKILGNGELSTPLKVQAAAFTGTARSKIEAAGGSCEVL</sequence>
<dbReference type="EMBL" id="CP001037">
    <property type="protein sequence ID" value="ACC82746.1"/>
    <property type="molecule type" value="Genomic_DNA"/>
</dbReference>
<dbReference type="RefSeq" id="WP_012410708.1">
    <property type="nucleotide sequence ID" value="NC_010628.1"/>
</dbReference>
<dbReference type="SMR" id="B2ITN8"/>
<dbReference type="STRING" id="63737.Npun_R4373"/>
<dbReference type="EnsemblBacteria" id="ACC82746">
    <property type="protein sequence ID" value="ACC82746"/>
    <property type="gene ID" value="Npun_R4373"/>
</dbReference>
<dbReference type="KEGG" id="npu:Npun_R4373"/>
<dbReference type="eggNOG" id="COG0200">
    <property type="taxonomic scope" value="Bacteria"/>
</dbReference>
<dbReference type="HOGENOM" id="CLU_055188_4_2_3"/>
<dbReference type="OrthoDB" id="9810293at2"/>
<dbReference type="PhylomeDB" id="B2ITN8"/>
<dbReference type="Proteomes" id="UP000001191">
    <property type="component" value="Chromosome"/>
</dbReference>
<dbReference type="GO" id="GO:0022625">
    <property type="term" value="C:cytosolic large ribosomal subunit"/>
    <property type="evidence" value="ECO:0007669"/>
    <property type="project" value="TreeGrafter"/>
</dbReference>
<dbReference type="GO" id="GO:0019843">
    <property type="term" value="F:rRNA binding"/>
    <property type="evidence" value="ECO:0007669"/>
    <property type="project" value="UniProtKB-UniRule"/>
</dbReference>
<dbReference type="GO" id="GO:0003735">
    <property type="term" value="F:structural constituent of ribosome"/>
    <property type="evidence" value="ECO:0007669"/>
    <property type="project" value="InterPro"/>
</dbReference>
<dbReference type="GO" id="GO:0006412">
    <property type="term" value="P:translation"/>
    <property type="evidence" value="ECO:0007669"/>
    <property type="project" value="UniProtKB-UniRule"/>
</dbReference>
<dbReference type="Gene3D" id="3.100.10.10">
    <property type="match status" value="1"/>
</dbReference>
<dbReference type="HAMAP" id="MF_01341">
    <property type="entry name" value="Ribosomal_uL15"/>
    <property type="match status" value="1"/>
</dbReference>
<dbReference type="InterPro" id="IPR030878">
    <property type="entry name" value="Ribosomal_uL15"/>
</dbReference>
<dbReference type="InterPro" id="IPR021131">
    <property type="entry name" value="Ribosomal_uL15/eL18"/>
</dbReference>
<dbReference type="InterPro" id="IPR036227">
    <property type="entry name" value="Ribosomal_uL15/eL18_sf"/>
</dbReference>
<dbReference type="InterPro" id="IPR005749">
    <property type="entry name" value="Ribosomal_uL15_bac-type"/>
</dbReference>
<dbReference type="InterPro" id="IPR001196">
    <property type="entry name" value="Ribosomal_uL15_CS"/>
</dbReference>
<dbReference type="NCBIfam" id="TIGR01071">
    <property type="entry name" value="rplO_bact"/>
    <property type="match status" value="1"/>
</dbReference>
<dbReference type="PANTHER" id="PTHR12934">
    <property type="entry name" value="50S RIBOSOMAL PROTEIN L15"/>
    <property type="match status" value="1"/>
</dbReference>
<dbReference type="PANTHER" id="PTHR12934:SF11">
    <property type="entry name" value="LARGE RIBOSOMAL SUBUNIT PROTEIN UL15M"/>
    <property type="match status" value="1"/>
</dbReference>
<dbReference type="Pfam" id="PF00828">
    <property type="entry name" value="Ribosomal_L27A"/>
    <property type="match status" value="1"/>
</dbReference>
<dbReference type="SUPFAM" id="SSF52080">
    <property type="entry name" value="Ribosomal proteins L15p and L18e"/>
    <property type="match status" value="1"/>
</dbReference>
<dbReference type="PROSITE" id="PS00475">
    <property type="entry name" value="RIBOSOMAL_L15"/>
    <property type="match status" value="1"/>
</dbReference>
<name>RL15_NOSP7</name>
<proteinExistence type="inferred from homology"/>
<accession>B2ITN8</accession>
<evidence type="ECO:0000255" key="1">
    <source>
        <dbReference type="HAMAP-Rule" id="MF_01341"/>
    </source>
</evidence>
<evidence type="ECO:0000256" key="2">
    <source>
        <dbReference type="SAM" id="MobiDB-lite"/>
    </source>
</evidence>
<evidence type="ECO:0000305" key="3"/>
<organism>
    <name type="scientific">Nostoc punctiforme (strain ATCC 29133 / PCC 73102)</name>
    <dbReference type="NCBI Taxonomy" id="63737"/>
    <lineage>
        <taxon>Bacteria</taxon>
        <taxon>Bacillati</taxon>
        <taxon>Cyanobacteriota</taxon>
        <taxon>Cyanophyceae</taxon>
        <taxon>Nostocales</taxon>
        <taxon>Nostocaceae</taxon>
        <taxon>Nostoc</taxon>
    </lineage>
</organism>
<gene>
    <name evidence="1" type="primary">rplO</name>
    <name type="ordered locus">Npun_R4373</name>
</gene>
<protein>
    <recommendedName>
        <fullName evidence="1">Large ribosomal subunit protein uL15</fullName>
    </recommendedName>
    <alternativeName>
        <fullName evidence="3">50S ribosomal protein L15</fullName>
    </alternativeName>
</protein>